<sequence length="195" mass="21403">MKEIVIASNNQGKINDFKVIFPDYHVIGISELIPDFDVEETGSTFEENAILKSEAAAKALNKTVIADDSGLEVFALNGEPGIYSARYAGENKSDEANIEKLLNKLGNTTDRRAQFVCVISMSGPDMETKVFKGTVSGEIADGKYGENGFGYDPIFYVPKLDKTMAQLSKEQKGQISHRRNAINLLQAFLEGDKNV</sequence>
<gene>
    <name type="ordered locus">SAS1085</name>
</gene>
<protein>
    <recommendedName>
        <fullName evidence="1">dITP/XTP pyrophosphatase</fullName>
        <ecNumber evidence="1">3.6.1.66</ecNumber>
    </recommendedName>
    <alternativeName>
        <fullName evidence="1">Non-canonical purine NTP pyrophosphatase</fullName>
    </alternativeName>
    <alternativeName>
        <fullName evidence="1">Non-standard purine NTP pyrophosphatase</fullName>
    </alternativeName>
    <alternativeName>
        <fullName evidence="1">Nucleoside-triphosphate diphosphatase</fullName>
    </alternativeName>
    <alternativeName>
        <fullName evidence="1">Nucleoside-triphosphate pyrophosphatase</fullName>
        <shortName evidence="1">NTPase</shortName>
    </alternativeName>
</protein>
<name>IXTPA_STAAS</name>
<keyword id="KW-0378">Hydrolase</keyword>
<keyword id="KW-0460">Magnesium</keyword>
<keyword id="KW-0479">Metal-binding</keyword>
<keyword id="KW-0546">Nucleotide metabolism</keyword>
<keyword id="KW-0547">Nucleotide-binding</keyword>
<reference key="1">
    <citation type="journal article" date="2004" name="Proc. Natl. Acad. Sci. U.S.A.">
        <title>Complete genomes of two clinical Staphylococcus aureus strains: evidence for the rapid evolution of virulence and drug resistance.</title>
        <authorList>
            <person name="Holden M.T.G."/>
            <person name="Feil E.J."/>
            <person name="Lindsay J.A."/>
            <person name="Peacock S.J."/>
            <person name="Day N.P.J."/>
            <person name="Enright M.C."/>
            <person name="Foster T.J."/>
            <person name="Moore C.E."/>
            <person name="Hurst L."/>
            <person name="Atkin R."/>
            <person name="Barron A."/>
            <person name="Bason N."/>
            <person name="Bentley S.D."/>
            <person name="Chillingworth C."/>
            <person name="Chillingworth T."/>
            <person name="Churcher C."/>
            <person name="Clark L."/>
            <person name="Corton C."/>
            <person name="Cronin A."/>
            <person name="Doggett J."/>
            <person name="Dowd L."/>
            <person name="Feltwell T."/>
            <person name="Hance Z."/>
            <person name="Harris B."/>
            <person name="Hauser H."/>
            <person name="Holroyd S."/>
            <person name="Jagels K."/>
            <person name="James K.D."/>
            <person name="Lennard N."/>
            <person name="Line A."/>
            <person name="Mayes R."/>
            <person name="Moule S."/>
            <person name="Mungall K."/>
            <person name="Ormond D."/>
            <person name="Quail M.A."/>
            <person name="Rabbinowitsch E."/>
            <person name="Rutherford K.M."/>
            <person name="Sanders M."/>
            <person name="Sharp S."/>
            <person name="Simmonds M."/>
            <person name="Stevens K."/>
            <person name="Whitehead S."/>
            <person name="Barrell B.G."/>
            <person name="Spratt B.G."/>
            <person name="Parkhill J."/>
        </authorList>
    </citation>
    <scope>NUCLEOTIDE SEQUENCE [LARGE SCALE GENOMIC DNA]</scope>
    <source>
        <strain>MSSA476</strain>
    </source>
</reference>
<proteinExistence type="inferred from homology"/>
<evidence type="ECO:0000255" key="1">
    <source>
        <dbReference type="HAMAP-Rule" id="MF_01405"/>
    </source>
</evidence>
<accession>Q6GA63</accession>
<comment type="function">
    <text evidence="1">Pyrophosphatase that catalyzes the hydrolysis of nucleoside triphosphates to their monophosphate derivatives, with a high preference for the non-canonical purine nucleotides XTP (xanthosine triphosphate), dITP (deoxyinosine triphosphate) and ITP. Seems to function as a house-cleaning enzyme that removes non-canonical purine nucleotides from the nucleotide pool, thus preventing their incorporation into DNA/RNA and avoiding chromosomal lesions.</text>
</comment>
<comment type="catalytic activity">
    <reaction evidence="1">
        <text>XTP + H2O = XMP + diphosphate + H(+)</text>
        <dbReference type="Rhea" id="RHEA:28610"/>
        <dbReference type="ChEBI" id="CHEBI:15377"/>
        <dbReference type="ChEBI" id="CHEBI:15378"/>
        <dbReference type="ChEBI" id="CHEBI:33019"/>
        <dbReference type="ChEBI" id="CHEBI:57464"/>
        <dbReference type="ChEBI" id="CHEBI:61314"/>
        <dbReference type="EC" id="3.6.1.66"/>
    </reaction>
</comment>
<comment type="catalytic activity">
    <reaction evidence="1">
        <text>dITP + H2O = dIMP + diphosphate + H(+)</text>
        <dbReference type="Rhea" id="RHEA:28342"/>
        <dbReference type="ChEBI" id="CHEBI:15377"/>
        <dbReference type="ChEBI" id="CHEBI:15378"/>
        <dbReference type="ChEBI" id="CHEBI:33019"/>
        <dbReference type="ChEBI" id="CHEBI:61194"/>
        <dbReference type="ChEBI" id="CHEBI:61382"/>
        <dbReference type="EC" id="3.6.1.66"/>
    </reaction>
</comment>
<comment type="catalytic activity">
    <reaction evidence="1">
        <text>ITP + H2O = IMP + diphosphate + H(+)</text>
        <dbReference type="Rhea" id="RHEA:29399"/>
        <dbReference type="ChEBI" id="CHEBI:15377"/>
        <dbReference type="ChEBI" id="CHEBI:15378"/>
        <dbReference type="ChEBI" id="CHEBI:33019"/>
        <dbReference type="ChEBI" id="CHEBI:58053"/>
        <dbReference type="ChEBI" id="CHEBI:61402"/>
        <dbReference type="EC" id="3.6.1.66"/>
    </reaction>
</comment>
<comment type="cofactor">
    <cofactor evidence="1">
        <name>Mg(2+)</name>
        <dbReference type="ChEBI" id="CHEBI:18420"/>
    </cofactor>
    <text evidence="1">Binds 1 Mg(2+) ion per subunit.</text>
</comment>
<comment type="subunit">
    <text evidence="1">Homodimer.</text>
</comment>
<comment type="similarity">
    <text evidence="1">Belongs to the HAM1 NTPase family.</text>
</comment>
<organism>
    <name type="scientific">Staphylococcus aureus (strain MSSA476)</name>
    <dbReference type="NCBI Taxonomy" id="282459"/>
    <lineage>
        <taxon>Bacteria</taxon>
        <taxon>Bacillati</taxon>
        <taxon>Bacillota</taxon>
        <taxon>Bacilli</taxon>
        <taxon>Bacillales</taxon>
        <taxon>Staphylococcaceae</taxon>
        <taxon>Staphylococcus</taxon>
    </lineage>
</organism>
<dbReference type="EC" id="3.6.1.66" evidence="1"/>
<dbReference type="EMBL" id="BX571857">
    <property type="protein sequence ID" value="CAG42860.1"/>
    <property type="molecule type" value="Genomic_DNA"/>
</dbReference>
<dbReference type="RefSeq" id="WP_000659317.1">
    <property type="nucleotide sequence ID" value="NC_002953.3"/>
</dbReference>
<dbReference type="SMR" id="Q6GA63"/>
<dbReference type="KEGG" id="sas:SAS1085"/>
<dbReference type="HOGENOM" id="CLU_082080_0_2_9"/>
<dbReference type="GO" id="GO:0005829">
    <property type="term" value="C:cytosol"/>
    <property type="evidence" value="ECO:0007669"/>
    <property type="project" value="TreeGrafter"/>
</dbReference>
<dbReference type="GO" id="GO:0035870">
    <property type="term" value="F:dITP diphosphatase activity"/>
    <property type="evidence" value="ECO:0007669"/>
    <property type="project" value="RHEA"/>
</dbReference>
<dbReference type="GO" id="GO:0036220">
    <property type="term" value="F:ITP diphosphatase activity"/>
    <property type="evidence" value="ECO:0007669"/>
    <property type="project" value="UniProtKB-EC"/>
</dbReference>
<dbReference type="GO" id="GO:0046872">
    <property type="term" value="F:metal ion binding"/>
    <property type="evidence" value="ECO:0007669"/>
    <property type="project" value="UniProtKB-KW"/>
</dbReference>
<dbReference type="GO" id="GO:0000166">
    <property type="term" value="F:nucleotide binding"/>
    <property type="evidence" value="ECO:0007669"/>
    <property type="project" value="UniProtKB-KW"/>
</dbReference>
<dbReference type="GO" id="GO:0017111">
    <property type="term" value="F:ribonucleoside triphosphate phosphatase activity"/>
    <property type="evidence" value="ECO:0007669"/>
    <property type="project" value="InterPro"/>
</dbReference>
<dbReference type="GO" id="GO:0036222">
    <property type="term" value="F:XTP diphosphatase activity"/>
    <property type="evidence" value="ECO:0007669"/>
    <property type="project" value="RHEA"/>
</dbReference>
<dbReference type="GO" id="GO:0009117">
    <property type="term" value="P:nucleotide metabolic process"/>
    <property type="evidence" value="ECO:0007669"/>
    <property type="project" value="UniProtKB-KW"/>
</dbReference>
<dbReference type="GO" id="GO:0009146">
    <property type="term" value="P:purine nucleoside triphosphate catabolic process"/>
    <property type="evidence" value="ECO:0007669"/>
    <property type="project" value="UniProtKB-UniRule"/>
</dbReference>
<dbReference type="CDD" id="cd00515">
    <property type="entry name" value="HAM1"/>
    <property type="match status" value="1"/>
</dbReference>
<dbReference type="FunFam" id="3.90.950.10:FF:000001">
    <property type="entry name" value="dITP/XTP pyrophosphatase"/>
    <property type="match status" value="1"/>
</dbReference>
<dbReference type="Gene3D" id="3.90.950.10">
    <property type="match status" value="1"/>
</dbReference>
<dbReference type="HAMAP" id="MF_01405">
    <property type="entry name" value="Non_canon_purine_NTPase"/>
    <property type="match status" value="1"/>
</dbReference>
<dbReference type="InterPro" id="IPR020922">
    <property type="entry name" value="dITP/XTP_pyrophosphatase"/>
</dbReference>
<dbReference type="InterPro" id="IPR029001">
    <property type="entry name" value="ITPase-like_fam"/>
</dbReference>
<dbReference type="InterPro" id="IPR002637">
    <property type="entry name" value="RdgB/HAM1"/>
</dbReference>
<dbReference type="NCBIfam" id="NF011397">
    <property type="entry name" value="PRK14822.1"/>
    <property type="match status" value="1"/>
</dbReference>
<dbReference type="NCBIfam" id="TIGR00042">
    <property type="entry name" value="RdgB/HAM1 family non-canonical purine NTP pyrophosphatase"/>
    <property type="match status" value="1"/>
</dbReference>
<dbReference type="PANTHER" id="PTHR11067:SF9">
    <property type="entry name" value="INOSINE TRIPHOSPHATE PYROPHOSPHATASE"/>
    <property type="match status" value="1"/>
</dbReference>
<dbReference type="PANTHER" id="PTHR11067">
    <property type="entry name" value="INOSINE TRIPHOSPHATE PYROPHOSPHATASE/HAM1 PROTEIN"/>
    <property type="match status" value="1"/>
</dbReference>
<dbReference type="Pfam" id="PF01725">
    <property type="entry name" value="Ham1p_like"/>
    <property type="match status" value="1"/>
</dbReference>
<dbReference type="SUPFAM" id="SSF52972">
    <property type="entry name" value="ITPase-like"/>
    <property type="match status" value="1"/>
</dbReference>
<feature type="chain" id="PRO_0000178231" description="dITP/XTP pyrophosphatase">
    <location>
        <begin position="1"/>
        <end position="195"/>
    </location>
</feature>
<feature type="active site" description="Proton acceptor" evidence="1">
    <location>
        <position position="68"/>
    </location>
</feature>
<feature type="binding site" evidence="1">
    <location>
        <begin position="8"/>
        <end position="13"/>
    </location>
    <ligand>
        <name>substrate</name>
    </ligand>
</feature>
<feature type="binding site" evidence="1">
    <location>
        <position position="39"/>
    </location>
    <ligand>
        <name>Mg(2+)</name>
        <dbReference type="ChEBI" id="CHEBI:18420"/>
    </ligand>
</feature>
<feature type="binding site" evidence="1">
    <location>
        <position position="68"/>
    </location>
    <ligand>
        <name>Mg(2+)</name>
        <dbReference type="ChEBI" id="CHEBI:18420"/>
    </ligand>
</feature>
<feature type="binding site" evidence="1">
    <location>
        <position position="69"/>
    </location>
    <ligand>
        <name>substrate</name>
    </ligand>
</feature>
<feature type="binding site" evidence="1">
    <location>
        <begin position="149"/>
        <end position="152"/>
    </location>
    <ligand>
        <name>substrate</name>
    </ligand>
</feature>
<feature type="binding site" evidence="1">
    <location>
        <position position="172"/>
    </location>
    <ligand>
        <name>substrate</name>
    </ligand>
</feature>
<feature type="binding site" evidence="1">
    <location>
        <begin position="177"/>
        <end position="178"/>
    </location>
    <ligand>
        <name>substrate</name>
    </ligand>
</feature>